<dbReference type="EMBL" id="CP000243">
    <property type="protein sequence ID" value="ABE09198.1"/>
    <property type="molecule type" value="Genomic_DNA"/>
</dbReference>
<dbReference type="RefSeq" id="WP_000130100.1">
    <property type="nucleotide sequence ID" value="NZ_CP064825.1"/>
</dbReference>
<dbReference type="SMR" id="Q1R616"/>
<dbReference type="GeneID" id="93778676"/>
<dbReference type="KEGG" id="eci:UTI89_C3761"/>
<dbReference type="HOGENOM" id="CLU_073626_1_1_6"/>
<dbReference type="Proteomes" id="UP000001952">
    <property type="component" value="Chromosome"/>
</dbReference>
<dbReference type="GO" id="GO:0022627">
    <property type="term" value="C:cytosolic small ribosomal subunit"/>
    <property type="evidence" value="ECO:0007669"/>
    <property type="project" value="TreeGrafter"/>
</dbReference>
<dbReference type="GO" id="GO:0019843">
    <property type="term" value="F:rRNA binding"/>
    <property type="evidence" value="ECO:0007669"/>
    <property type="project" value="UniProtKB-UniRule"/>
</dbReference>
<dbReference type="GO" id="GO:0003735">
    <property type="term" value="F:structural constituent of ribosome"/>
    <property type="evidence" value="ECO:0007669"/>
    <property type="project" value="InterPro"/>
</dbReference>
<dbReference type="GO" id="GO:0006412">
    <property type="term" value="P:translation"/>
    <property type="evidence" value="ECO:0007669"/>
    <property type="project" value="UniProtKB-UniRule"/>
</dbReference>
<dbReference type="CDD" id="cd00364">
    <property type="entry name" value="Ribosomal_uS17"/>
    <property type="match status" value="1"/>
</dbReference>
<dbReference type="FunFam" id="2.40.50.140:FF:000014">
    <property type="entry name" value="30S ribosomal protein S17"/>
    <property type="match status" value="1"/>
</dbReference>
<dbReference type="Gene3D" id="2.40.50.140">
    <property type="entry name" value="Nucleic acid-binding proteins"/>
    <property type="match status" value="1"/>
</dbReference>
<dbReference type="HAMAP" id="MF_01345_B">
    <property type="entry name" value="Ribosomal_uS17_B"/>
    <property type="match status" value="1"/>
</dbReference>
<dbReference type="InterPro" id="IPR012340">
    <property type="entry name" value="NA-bd_OB-fold"/>
</dbReference>
<dbReference type="InterPro" id="IPR000266">
    <property type="entry name" value="Ribosomal_uS17"/>
</dbReference>
<dbReference type="InterPro" id="IPR019984">
    <property type="entry name" value="Ribosomal_uS17_bact/chlr"/>
</dbReference>
<dbReference type="InterPro" id="IPR019979">
    <property type="entry name" value="Ribosomal_uS17_CS"/>
</dbReference>
<dbReference type="NCBIfam" id="NF004123">
    <property type="entry name" value="PRK05610.1"/>
    <property type="match status" value="1"/>
</dbReference>
<dbReference type="NCBIfam" id="TIGR03635">
    <property type="entry name" value="uS17_bact"/>
    <property type="match status" value="1"/>
</dbReference>
<dbReference type="PANTHER" id="PTHR10744">
    <property type="entry name" value="40S RIBOSOMAL PROTEIN S11 FAMILY MEMBER"/>
    <property type="match status" value="1"/>
</dbReference>
<dbReference type="PANTHER" id="PTHR10744:SF1">
    <property type="entry name" value="SMALL RIBOSOMAL SUBUNIT PROTEIN US17M"/>
    <property type="match status" value="1"/>
</dbReference>
<dbReference type="Pfam" id="PF00366">
    <property type="entry name" value="Ribosomal_S17"/>
    <property type="match status" value="1"/>
</dbReference>
<dbReference type="PRINTS" id="PR00973">
    <property type="entry name" value="RIBOSOMALS17"/>
</dbReference>
<dbReference type="SUPFAM" id="SSF50249">
    <property type="entry name" value="Nucleic acid-binding proteins"/>
    <property type="match status" value="1"/>
</dbReference>
<dbReference type="PROSITE" id="PS00056">
    <property type="entry name" value="RIBOSOMAL_S17"/>
    <property type="match status" value="1"/>
</dbReference>
<gene>
    <name evidence="1" type="primary">rpsQ</name>
    <name type="ordered locus">UTI89_C3761</name>
</gene>
<reference key="1">
    <citation type="journal article" date="2006" name="Proc. Natl. Acad. Sci. U.S.A.">
        <title>Identification of genes subject to positive selection in uropathogenic strains of Escherichia coli: a comparative genomics approach.</title>
        <authorList>
            <person name="Chen S.L."/>
            <person name="Hung C.-S."/>
            <person name="Xu J."/>
            <person name="Reigstad C.S."/>
            <person name="Magrini V."/>
            <person name="Sabo A."/>
            <person name="Blasiar D."/>
            <person name="Bieri T."/>
            <person name="Meyer R.R."/>
            <person name="Ozersky P."/>
            <person name="Armstrong J.R."/>
            <person name="Fulton R.S."/>
            <person name="Latreille J.P."/>
            <person name="Spieth J."/>
            <person name="Hooton T.M."/>
            <person name="Mardis E.R."/>
            <person name="Hultgren S.J."/>
            <person name="Gordon J.I."/>
        </authorList>
    </citation>
    <scope>NUCLEOTIDE SEQUENCE [LARGE SCALE GENOMIC DNA]</scope>
    <source>
        <strain>UTI89 / UPEC</strain>
    </source>
</reference>
<accession>Q1R616</accession>
<organism>
    <name type="scientific">Escherichia coli (strain UTI89 / UPEC)</name>
    <dbReference type="NCBI Taxonomy" id="364106"/>
    <lineage>
        <taxon>Bacteria</taxon>
        <taxon>Pseudomonadati</taxon>
        <taxon>Pseudomonadota</taxon>
        <taxon>Gammaproteobacteria</taxon>
        <taxon>Enterobacterales</taxon>
        <taxon>Enterobacteriaceae</taxon>
        <taxon>Escherichia</taxon>
    </lineage>
</organism>
<evidence type="ECO:0000255" key="1">
    <source>
        <dbReference type="HAMAP-Rule" id="MF_01345"/>
    </source>
</evidence>
<evidence type="ECO:0000305" key="2"/>
<sequence length="84" mass="9704">MTDKIRTLQGRVVSDKMEKSIVVAIERFVKHPIYGKFIKRTTKLHVHDENNECGIGDVVEIRECRPLSKTKSWTLVRVVEKAVL</sequence>
<proteinExistence type="inferred from homology"/>
<feature type="chain" id="PRO_0000255676" description="Small ribosomal subunit protein uS17">
    <location>
        <begin position="1"/>
        <end position="84"/>
    </location>
</feature>
<protein>
    <recommendedName>
        <fullName evidence="1">Small ribosomal subunit protein uS17</fullName>
    </recommendedName>
    <alternativeName>
        <fullName evidence="2">30S ribosomal protein S17</fullName>
    </alternativeName>
</protein>
<name>RS17_ECOUT</name>
<keyword id="KW-0687">Ribonucleoprotein</keyword>
<keyword id="KW-0689">Ribosomal protein</keyword>
<keyword id="KW-0694">RNA-binding</keyword>
<keyword id="KW-0699">rRNA-binding</keyword>
<comment type="function">
    <text evidence="1">One of the primary rRNA binding proteins, it binds specifically to the 5'-end of 16S ribosomal RNA.</text>
</comment>
<comment type="subunit">
    <text evidence="1">Part of the 30S ribosomal subunit.</text>
</comment>
<comment type="similarity">
    <text evidence="1">Belongs to the universal ribosomal protein uS17 family.</text>
</comment>